<gene>
    <name evidence="1" type="primary">cysG</name>
    <name type="ordered locus">EC55989_3774</name>
</gene>
<keyword id="KW-0169">Cobalamin biosynthesis</keyword>
<keyword id="KW-0456">Lyase</keyword>
<keyword id="KW-0489">Methyltransferase</keyword>
<keyword id="KW-0511">Multifunctional enzyme</keyword>
<keyword id="KW-0520">NAD</keyword>
<keyword id="KW-0560">Oxidoreductase</keyword>
<keyword id="KW-0597">Phosphoprotein</keyword>
<keyword id="KW-0627">Porphyrin biosynthesis</keyword>
<keyword id="KW-1185">Reference proteome</keyword>
<keyword id="KW-0949">S-adenosyl-L-methionine</keyword>
<keyword id="KW-0808">Transferase</keyword>
<reference key="1">
    <citation type="journal article" date="2009" name="PLoS Genet.">
        <title>Organised genome dynamics in the Escherichia coli species results in highly diverse adaptive paths.</title>
        <authorList>
            <person name="Touchon M."/>
            <person name="Hoede C."/>
            <person name="Tenaillon O."/>
            <person name="Barbe V."/>
            <person name="Baeriswyl S."/>
            <person name="Bidet P."/>
            <person name="Bingen E."/>
            <person name="Bonacorsi S."/>
            <person name="Bouchier C."/>
            <person name="Bouvet O."/>
            <person name="Calteau A."/>
            <person name="Chiapello H."/>
            <person name="Clermont O."/>
            <person name="Cruveiller S."/>
            <person name="Danchin A."/>
            <person name="Diard M."/>
            <person name="Dossat C."/>
            <person name="Karoui M.E."/>
            <person name="Frapy E."/>
            <person name="Garry L."/>
            <person name="Ghigo J.M."/>
            <person name="Gilles A.M."/>
            <person name="Johnson J."/>
            <person name="Le Bouguenec C."/>
            <person name="Lescat M."/>
            <person name="Mangenot S."/>
            <person name="Martinez-Jehanne V."/>
            <person name="Matic I."/>
            <person name="Nassif X."/>
            <person name="Oztas S."/>
            <person name="Petit M.A."/>
            <person name="Pichon C."/>
            <person name="Rouy Z."/>
            <person name="Ruf C.S."/>
            <person name="Schneider D."/>
            <person name="Tourret J."/>
            <person name="Vacherie B."/>
            <person name="Vallenet D."/>
            <person name="Medigue C."/>
            <person name="Rocha E.P.C."/>
            <person name="Denamur E."/>
        </authorList>
    </citation>
    <scope>NUCLEOTIDE SEQUENCE [LARGE SCALE GENOMIC DNA]</scope>
    <source>
        <strain>55989 / EAEC</strain>
    </source>
</reference>
<feature type="chain" id="PRO_1000186938" description="Siroheme synthase">
    <location>
        <begin position="1"/>
        <end position="457"/>
    </location>
</feature>
<feature type="region of interest" description="Precorrin-2 dehydrogenase /sirohydrochlorin ferrochelatase" evidence="1">
    <location>
        <begin position="1"/>
        <end position="204"/>
    </location>
</feature>
<feature type="region of interest" description="Uroporphyrinogen-III C-methyltransferase" evidence="1">
    <location>
        <begin position="216"/>
        <end position="457"/>
    </location>
</feature>
<feature type="active site" description="Proton acceptor" evidence="1">
    <location>
        <position position="248"/>
    </location>
</feature>
<feature type="active site" description="Proton donor" evidence="1">
    <location>
        <position position="270"/>
    </location>
</feature>
<feature type="binding site" evidence="1">
    <location>
        <begin position="22"/>
        <end position="23"/>
    </location>
    <ligand>
        <name>NAD(+)</name>
        <dbReference type="ChEBI" id="CHEBI:57540"/>
    </ligand>
</feature>
<feature type="binding site" evidence="1">
    <location>
        <begin position="43"/>
        <end position="44"/>
    </location>
    <ligand>
        <name>NAD(+)</name>
        <dbReference type="ChEBI" id="CHEBI:57540"/>
    </ligand>
</feature>
<feature type="binding site" evidence="1">
    <location>
        <position position="225"/>
    </location>
    <ligand>
        <name>S-adenosyl-L-methionine</name>
        <dbReference type="ChEBI" id="CHEBI:59789"/>
    </ligand>
</feature>
<feature type="binding site" evidence="1">
    <location>
        <begin position="301"/>
        <end position="303"/>
    </location>
    <ligand>
        <name>S-adenosyl-L-methionine</name>
        <dbReference type="ChEBI" id="CHEBI:59789"/>
    </ligand>
</feature>
<feature type="binding site" evidence="1">
    <location>
        <position position="306"/>
    </location>
    <ligand>
        <name>S-adenosyl-L-methionine</name>
        <dbReference type="ChEBI" id="CHEBI:59789"/>
    </ligand>
</feature>
<feature type="binding site" evidence="1">
    <location>
        <begin position="331"/>
        <end position="332"/>
    </location>
    <ligand>
        <name>S-adenosyl-L-methionine</name>
        <dbReference type="ChEBI" id="CHEBI:59789"/>
    </ligand>
</feature>
<feature type="binding site" evidence="1">
    <location>
        <position position="382"/>
    </location>
    <ligand>
        <name>S-adenosyl-L-methionine</name>
        <dbReference type="ChEBI" id="CHEBI:59789"/>
    </ligand>
</feature>
<feature type="binding site" evidence="1">
    <location>
        <position position="411"/>
    </location>
    <ligand>
        <name>S-adenosyl-L-methionine</name>
        <dbReference type="ChEBI" id="CHEBI:59789"/>
    </ligand>
</feature>
<feature type="modified residue" description="Phosphoserine" evidence="1">
    <location>
        <position position="128"/>
    </location>
</feature>
<comment type="function">
    <text evidence="1">Multifunctional enzyme that catalyzes the SAM-dependent methylations of uroporphyrinogen III at position C-2 and C-7 to form precorrin-2 via precorrin-1. Then it catalyzes the NAD-dependent ring dehydrogenation of precorrin-2 to yield sirohydrochlorin. Finally, it catalyzes the ferrochelation of sirohydrochlorin to yield siroheme.</text>
</comment>
<comment type="catalytic activity">
    <reaction evidence="1">
        <text>uroporphyrinogen III + 2 S-adenosyl-L-methionine = precorrin-2 + 2 S-adenosyl-L-homocysteine + H(+)</text>
        <dbReference type="Rhea" id="RHEA:32459"/>
        <dbReference type="ChEBI" id="CHEBI:15378"/>
        <dbReference type="ChEBI" id="CHEBI:57308"/>
        <dbReference type="ChEBI" id="CHEBI:57856"/>
        <dbReference type="ChEBI" id="CHEBI:58827"/>
        <dbReference type="ChEBI" id="CHEBI:59789"/>
        <dbReference type="EC" id="2.1.1.107"/>
    </reaction>
</comment>
<comment type="catalytic activity">
    <reaction evidence="1">
        <text>precorrin-2 + NAD(+) = sirohydrochlorin + NADH + 2 H(+)</text>
        <dbReference type="Rhea" id="RHEA:15613"/>
        <dbReference type="ChEBI" id="CHEBI:15378"/>
        <dbReference type="ChEBI" id="CHEBI:57540"/>
        <dbReference type="ChEBI" id="CHEBI:57945"/>
        <dbReference type="ChEBI" id="CHEBI:58351"/>
        <dbReference type="ChEBI" id="CHEBI:58827"/>
        <dbReference type="EC" id="1.3.1.76"/>
    </reaction>
</comment>
<comment type="catalytic activity">
    <reaction evidence="1">
        <text>siroheme + 2 H(+) = sirohydrochlorin + Fe(2+)</text>
        <dbReference type="Rhea" id="RHEA:24360"/>
        <dbReference type="ChEBI" id="CHEBI:15378"/>
        <dbReference type="ChEBI" id="CHEBI:29033"/>
        <dbReference type="ChEBI" id="CHEBI:58351"/>
        <dbReference type="ChEBI" id="CHEBI:60052"/>
        <dbReference type="EC" id="4.99.1.4"/>
    </reaction>
</comment>
<comment type="pathway">
    <text evidence="1">Cofactor biosynthesis; adenosylcobalamin biosynthesis; precorrin-2 from uroporphyrinogen III: step 1/1.</text>
</comment>
<comment type="pathway">
    <text evidence="1">Cofactor biosynthesis; adenosylcobalamin biosynthesis; sirohydrochlorin from precorrin-2: step 1/1.</text>
</comment>
<comment type="pathway">
    <text evidence="1">Porphyrin-containing compound metabolism; siroheme biosynthesis; precorrin-2 from uroporphyrinogen III: step 1/1.</text>
</comment>
<comment type="pathway">
    <text evidence="1">Porphyrin-containing compound metabolism; siroheme biosynthesis; siroheme from sirohydrochlorin: step 1/1.</text>
</comment>
<comment type="pathway">
    <text evidence="1">Porphyrin-containing compound metabolism; siroheme biosynthesis; sirohydrochlorin from precorrin-2: step 1/1.</text>
</comment>
<comment type="similarity">
    <text evidence="1">In the N-terminal section; belongs to the precorrin-2 dehydrogenase / sirohydrochlorin ferrochelatase family.</text>
</comment>
<comment type="similarity">
    <text evidence="1">In the C-terminal section; belongs to the precorrin methyltransferase family.</text>
</comment>
<accession>B7L4P2</accession>
<dbReference type="EC" id="2.1.1.107" evidence="1"/>
<dbReference type="EC" id="1.3.1.76" evidence="1"/>
<dbReference type="EC" id="4.99.1.4" evidence="1"/>
<dbReference type="EMBL" id="CU928145">
    <property type="protein sequence ID" value="CAV00104.1"/>
    <property type="molecule type" value="Genomic_DNA"/>
</dbReference>
<dbReference type="RefSeq" id="WP_000349855.1">
    <property type="nucleotide sequence ID" value="NC_011748.1"/>
</dbReference>
<dbReference type="SMR" id="B7L4P2"/>
<dbReference type="GeneID" id="75173526"/>
<dbReference type="KEGG" id="eck:EC55989_3774"/>
<dbReference type="HOGENOM" id="CLU_011276_2_0_6"/>
<dbReference type="UniPathway" id="UPA00148">
    <property type="reaction ID" value="UER00211"/>
</dbReference>
<dbReference type="UniPathway" id="UPA00148">
    <property type="reaction ID" value="UER00222"/>
</dbReference>
<dbReference type="UniPathway" id="UPA00262">
    <property type="reaction ID" value="UER00211"/>
</dbReference>
<dbReference type="UniPathway" id="UPA00262">
    <property type="reaction ID" value="UER00222"/>
</dbReference>
<dbReference type="UniPathway" id="UPA00262">
    <property type="reaction ID" value="UER00376"/>
</dbReference>
<dbReference type="Proteomes" id="UP000000746">
    <property type="component" value="Chromosome"/>
</dbReference>
<dbReference type="GO" id="GO:0051287">
    <property type="term" value="F:NAD binding"/>
    <property type="evidence" value="ECO:0007669"/>
    <property type="project" value="InterPro"/>
</dbReference>
<dbReference type="GO" id="GO:0043115">
    <property type="term" value="F:precorrin-2 dehydrogenase activity"/>
    <property type="evidence" value="ECO:0007669"/>
    <property type="project" value="UniProtKB-UniRule"/>
</dbReference>
<dbReference type="GO" id="GO:0051266">
    <property type="term" value="F:sirohydrochlorin ferrochelatase activity"/>
    <property type="evidence" value="ECO:0007669"/>
    <property type="project" value="UniProtKB-EC"/>
</dbReference>
<dbReference type="GO" id="GO:0004851">
    <property type="term" value="F:uroporphyrin-III C-methyltransferase activity"/>
    <property type="evidence" value="ECO:0007669"/>
    <property type="project" value="UniProtKB-UniRule"/>
</dbReference>
<dbReference type="GO" id="GO:0009236">
    <property type="term" value="P:cobalamin biosynthetic process"/>
    <property type="evidence" value="ECO:0007669"/>
    <property type="project" value="UniProtKB-UniRule"/>
</dbReference>
<dbReference type="GO" id="GO:0032259">
    <property type="term" value="P:methylation"/>
    <property type="evidence" value="ECO:0007669"/>
    <property type="project" value="UniProtKB-KW"/>
</dbReference>
<dbReference type="GO" id="GO:0019354">
    <property type="term" value="P:siroheme biosynthetic process"/>
    <property type="evidence" value="ECO:0007669"/>
    <property type="project" value="UniProtKB-UniRule"/>
</dbReference>
<dbReference type="CDD" id="cd11642">
    <property type="entry name" value="SUMT"/>
    <property type="match status" value="1"/>
</dbReference>
<dbReference type="FunFam" id="1.10.8.210:FF:000001">
    <property type="entry name" value="Siroheme synthase"/>
    <property type="match status" value="1"/>
</dbReference>
<dbReference type="FunFam" id="3.30.160.110:FF:000001">
    <property type="entry name" value="Siroheme synthase"/>
    <property type="match status" value="1"/>
</dbReference>
<dbReference type="FunFam" id="3.30.950.10:FF:000001">
    <property type="entry name" value="Siroheme synthase"/>
    <property type="match status" value="1"/>
</dbReference>
<dbReference type="FunFam" id="3.40.1010.10:FF:000001">
    <property type="entry name" value="Siroheme synthase"/>
    <property type="match status" value="1"/>
</dbReference>
<dbReference type="FunFam" id="3.40.50.720:FF:000092">
    <property type="entry name" value="Siroheme synthase"/>
    <property type="match status" value="1"/>
</dbReference>
<dbReference type="Gene3D" id="3.40.1010.10">
    <property type="entry name" value="Cobalt-precorrin-4 Transmethylase, Domain 1"/>
    <property type="match status" value="1"/>
</dbReference>
<dbReference type="Gene3D" id="3.30.950.10">
    <property type="entry name" value="Methyltransferase, Cobalt-precorrin-4 Transmethylase, Domain 2"/>
    <property type="match status" value="1"/>
</dbReference>
<dbReference type="Gene3D" id="3.40.50.720">
    <property type="entry name" value="NAD(P)-binding Rossmann-like Domain"/>
    <property type="match status" value="1"/>
</dbReference>
<dbReference type="Gene3D" id="1.10.8.210">
    <property type="entry name" value="Sirohaem synthase, dimerisation domain"/>
    <property type="match status" value="1"/>
</dbReference>
<dbReference type="Gene3D" id="3.30.160.110">
    <property type="entry name" value="Siroheme synthase, domain 2"/>
    <property type="match status" value="1"/>
</dbReference>
<dbReference type="HAMAP" id="MF_01646">
    <property type="entry name" value="Siroheme_synth"/>
    <property type="match status" value="1"/>
</dbReference>
<dbReference type="InterPro" id="IPR000878">
    <property type="entry name" value="4pyrrol_Mease"/>
</dbReference>
<dbReference type="InterPro" id="IPR035996">
    <property type="entry name" value="4pyrrol_Methylase_sf"/>
</dbReference>
<dbReference type="InterPro" id="IPR014777">
    <property type="entry name" value="4pyrrole_Mease_sub1"/>
</dbReference>
<dbReference type="InterPro" id="IPR014776">
    <property type="entry name" value="4pyrrole_Mease_sub2"/>
</dbReference>
<dbReference type="InterPro" id="IPR006366">
    <property type="entry name" value="CobA/CysG_C"/>
</dbReference>
<dbReference type="InterPro" id="IPR036291">
    <property type="entry name" value="NAD(P)-bd_dom_sf"/>
</dbReference>
<dbReference type="InterPro" id="IPR050161">
    <property type="entry name" value="Siro_Cobalamin_biosynth"/>
</dbReference>
<dbReference type="InterPro" id="IPR037115">
    <property type="entry name" value="Sirohaem_synt_dimer_dom_sf"/>
</dbReference>
<dbReference type="InterPro" id="IPR012409">
    <property type="entry name" value="Sirohaem_synth"/>
</dbReference>
<dbReference type="InterPro" id="IPR028281">
    <property type="entry name" value="Sirohaem_synthase_central"/>
</dbReference>
<dbReference type="InterPro" id="IPR019478">
    <property type="entry name" value="Sirohaem_synthase_dimer_dom"/>
</dbReference>
<dbReference type="InterPro" id="IPR006367">
    <property type="entry name" value="Sirohaem_synthase_N"/>
</dbReference>
<dbReference type="InterPro" id="IPR003043">
    <property type="entry name" value="Uropor_MeTrfase_CS"/>
</dbReference>
<dbReference type="NCBIfam" id="TIGR01469">
    <property type="entry name" value="cobA_cysG_Cterm"/>
    <property type="match status" value="1"/>
</dbReference>
<dbReference type="NCBIfam" id="TIGR01470">
    <property type="entry name" value="cysG_Nterm"/>
    <property type="match status" value="1"/>
</dbReference>
<dbReference type="NCBIfam" id="NF004790">
    <property type="entry name" value="PRK06136.1"/>
    <property type="match status" value="1"/>
</dbReference>
<dbReference type="NCBIfam" id="NF007922">
    <property type="entry name" value="PRK10637.1"/>
    <property type="match status" value="1"/>
</dbReference>
<dbReference type="PANTHER" id="PTHR45790:SF1">
    <property type="entry name" value="SIROHEME SYNTHASE"/>
    <property type="match status" value="1"/>
</dbReference>
<dbReference type="PANTHER" id="PTHR45790">
    <property type="entry name" value="SIROHEME SYNTHASE-RELATED"/>
    <property type="match status" value="1"/>
</dbReference>
<dbReference type="Pfam" id="PF10414">
    <property type="entry name" value="CysG_dimeriser"/>
    <property type="match status" value="1"/>
</dbReference>
<dbReference type="Pfam" id="PF13241">
    <property type="entry name" value="NAD_binding_7"/>
    <property type="match status" value="1"/>
</dbReference>
<dbReference type="Pfam" id="PF14824">
    <property type="entry name" value="Sirohm_synth_M"/>
    <property type="match status" value="1"/>
</dbReference>
<dbReference type="Pfam" id="PF00590">
    <property type="entry name" value="TP_methylase"/>
    <property type="match status" value="1"/>
</dbReference>
<dbReference type="PIRSF" id="PIRSF036426">
    <property type="entry name" value="Sirohaem_synth"/>
    <property type="match status" value="1"/>
</dbReference>
<dbReference type="SUPFAM" id="SSF51735">
    <property type="entry name" value="NAD(P)-binding Rossmann-fold domains"/>
    <property type="match status" value="1"/>
</dbReference>
<dbReference type="SUPFAM" id="SSF75615">
    <property type="entry name" value="Siroheme synthase middle domains-like"/>
    <property type="match status" value="1"/>
</dbReference>
<dbReference type="SUPFAM" id="SSF53790">
    <property type="entry name" value="Tetrapyrrole methylase"/>
    <property type="match status" value="1"/>
</dbReference>
<dbReference type="PROSITE" id="PS00839">
    <property type="entry name" value="SUMT_1"/>
    <property type="match status" value="1"/>
</dbReference>
<dbReference type="PROSITE" id="PS00840">
    <property type="entry name" value="SUMT_2"/>
    <property type="match status" value="1"/>
</dbReference>
<organism>
    <name type="scientific">Escherichia coli (strain 55989 / EAEC)</name>
    <dbReference type="NCBI Taxonomy" id="585055"/>
    <lineage>
        <taxon>Bacteria</taxon>
        <taxon>Pseudomonadati</taxon>
        <taxon>Pseudomonadota</taxon>
        <taxon>Gammaproteobacteria</taxon>
        <taxon>Enterobacterales</taxon>
        <taxon>Enterobacteriaceae</taxon>
        <taxon>Escherichia</taxon>
    </lineage>
</organism>
<name>CYSG_ECO55</name>
<protein>
    <recommendedName>
        <fullName evidence="1">Siroheme synthase</fullName>
    </recommendedName>
    <domain>
        <recommendedName>
            <fullName evidence="1">Uroporphyrinogen-III C-methyltransferase</fullName>
            <shortName evidence="1">Urogen III methylase</shortName>
            <ecNumber evidence="1">2.1.1.107</ecNumber>
        </recommendedName>
        <alternativeName>
            <fullName evidence="1">SUMT</fullName>
        </alternativeName>
        <alternativeName>
            <fullName evidence="1">Uroporphyrinogen III methylase</fullName>
            <shortName evidence="1">UROM</shortName>
        </alternativeName>
    </domain>
    <domain>
        <recommendedName>
            <fullName evidence="1">Precorrin-2 dehydrogenase</fullName>
            <ecNumber evidence="1">1.3.1.76</ecNumber>
        </recommendedName>
    </domain>
    <domain>
        <recommendedName>
            <fullName evidence="1">Sirohydrochlorin ferrochelatase</fullName>
            <ecNumber evidence="1">4.99.1.4</ecNumber>
        </recommendedName>
    </domain>
</protein>
<evidence type="ECO:0000255" key="1">
    <source>
        <dbReference type="HAMAP-Rule" id="MF_01646"/>
    </source>
</evidence>
<sequence length="457" mass="49951">MDHLPIFCQLRDRDCLIVGGGDVAERKARLLLDAGARLTVNALAFIPQFTAWADAGMLTLVEGPFDESLLDTCWLAIAATDDDALNQRVSEAAEARRIFCNVVDAPKAASFIMPSIIDRSPLMVAVSSGGTSPVLARLLREKLESLLPLHLGQVAKYAGQLRGRVKQQFATMGERRRFWEKLFVNDRLAQSLANNDQKAITETTEQLINEPLDHRGEVVLVGAGPGDAGLLTLKGLQQIQQADVVVYDRLVSDDIMNLVRRDADRVFVGKRAGYHCVPQEEINQILLREAQKGKRVVRLKGGDPFIFGRGGEELETLCNAGIPFSVVPGITAASGCSAYSGIPLTHRDYAQSVRLITGHLKTGGELDWENLAAEKQTLVFYMGLNQAATIQQKLIEHGMPGEMPVAIVENGTAVTQRVIDGTLTQLGELAQQMNSPSLIIIGRVVGLRDKLNWFSNH</sequence>
<proteinExistence type="inferred from homology"/>